<gene>
    <name evidence="1" type="primary">pgi</name>
    <name type="ordered locus">VNG_1992G</name>
</gene>
<sequence>MRIDIGAALDATATPGVPPDALDRLDDRVAHAHDRITAGMDGDEFGYAALNLPRTVDVDAITAAADAVADADTLVTVGIGGSALGAATLVDALGDDDLDYHALDNVDPAHVTRLLDRIDLSTSAVHVVSRSGTTAETLANFLVVRDAMDDAGVDWTARTLVTTGDDGPLRALADTHDLPVLDAPRGVPGRFAALSTVALPAAAIAGVDVGELVAGAADGRAALAGSLEDCSAYAYGATAYALDQRGAGVNAMLPYAERLETFAEWFAQLWAESLGKDGVGQTPARALGATDQHSQLQLYRAGPRDKLVTMLRPASRPDCAIPEAELADIDYLTGGDLGALLDAEFEATAASLAASGVPTVRVEVPAVDARSVGRLLFDFEAACVLAGELYGVETFTQPAVEWGKNAARELLRGEDPLPETETHIVE</sequence>
<keyword id="KW-0963">Cytoplasm</keyword>
<keyword id="KW-0312">Gluconeogenesis</keyword>
<keyword id="KW-0324">Glycolysis</keyword>
<keyword id="KW-0413">Isomerase</keyword>
<keyword id="KW-1185">Reference proteome</keyword>
<accession>Q9HNQ6</accession>
<proteinExistence type="inferred from homology"/>
<name>G6PI_HALSA</name>
<dbReference type="EC" id="5.3.1.9" evidence="1"/>
<dbReference type="EMBL" id="AE004437">
    <property type="protein sequence ID" value="AAG20164.1"/>
    <property type="molecule type" value="Genomic_DNA"/>
</dbReference>
<dbReference type="PIR" id="H84349">
    <property type="entry name" value="H84349"/>
</dbReference>
<dbReference type="RefSeq" id="WP_010903465.1">
    <property type="nucleotide sequence ID" value="NC_002607.1"/>
</dbReference>
<dbReference type="SMR" id="Q9HNQ6"/>
<dbReference type="FunCoup" id="Q9HNQ6">
    <property type="interactions" value="125"/>
</dbReference>
<dbReference type="STRING" id="64091.VNG_1992G"/>
<dbReference type="PaxDb" id="64091-VNG_1992G"/>
<dbReference type="KEGG" id="hal:VNG_1992G"/>
<dbReference type="PATRIC" id="fig|64091.14.peg.1521"/>
<dbReference type="HOGENOM" id="CLU_037303_1_0_2"/>
<dbReference type="InParanoid" id="Q9HNQ6"/>
<dbReference type="OrthoDB" id="168618at2157"/>
<dbReference type="PhylomeDB" id="Q9HNQ6"/>
<dbReference type="UniPathway" id="UPA00109">
    <property type="reaction ID" value="UER00181"/>
</dbReference>
<dbReference type="UniPathway" id="UPA00138"/>
<dbReference type="Proteomes" id="UP000000554">
    <property type="component" value="Chromosome"/>
</dbReference>
<dbReference type="GO" id="GO:0005829">
    <property type="term" value="C:cytosol"/>
    <property type="evidence" value="ECO:0000318"/>
    <property type="project" value="GO_Central"/>
</dbReference>
<dbReference type="GO" id="GO:0097367">
    <property type="term" value="F:carbohydrate derivative binding"/>
    <property type="evidence" value="ECO:0007669"/>
    <property type="project" value="InterPro"/>
</dbReference>
<dbReference type="GO" id="GO:0004347">
    <property type="term" value="F:glucose-6-phosphate isomerase activity"/>
    <property type="evidence" value="ECO:0000318"/>
    <property type="project" value="GO_Central"/>
</dbReference>
<dbReference type="GO" id="GO:0048029">
    <property type="term" value="F:monosaccharide binding"/>
    <property type="evidence" value="ECO:0000318"/>
    <property type="project" value="GO_Central"/>
</dbReference>
<dbReference type="GO" id="GO:0006094">
    <property type="term" value="P:gluconeogenesis"/>
    <property type="evidence" value="ECO:0000318"/>
    <property type="project" value="GO_Central"/>
</dbReference>
<dbReference type="GO" id="GO:0051156">
    <property type="term" value="P:glucose 6-phosphate metabolic process"/>
    <property type="evidence" value="ECO:0000318"/>
    <property type="project" value="GO_Central"/>
</dbReference>
<dbReference type="GO" id="GO:0006096">
    <property type="term" value="P:glycolytic process"/>
    <property type="evidence" value="ECO:0000318"/>
    <property type="project" value="GO_Central"/>
</dbReference>
<dbReference type="CDD" id="cd05015">
    <property type="entry name" value="SIS_PGI_1"/>
    <property type="match status" value="1"/>
</dbReference>
<dbReference type="CDD" id="cd05016">
    <property type="entry name" value="SIS_PGI_2"/>
    <property type="match status" value="1"/>
</dbReference>
<dbReference type="Gene3D" id="3.40.50.10490">
    <property type="entry name" value="Glucose-6-phosphate isomerase like protein, domain 1"/>
    <property type="match status" value="2"/>
</dbReference>
<dbReference type="HAMAP" id="MF_00473">
    <property type="entry name" value="G6P_isomerase"/>
    <property type="match status" value="1"/>
</dbReference>
<dbReference type="InterPro" id="IPR001672">
    <property type="entry name" value="G6P_Isomerase"/>
</dbReference>
<dbReference type="InterPro" id="IPR018189">
    <property type="entry name" value="Phosphoglucose_isomerase_CS"/>
</dbReference>
<dbReference type="InterPro" id="IPR046348">
    <property type="entry name" value="SIS_dom_sf"/>
</dbReference>
<dbReference type="InterPro" id="IPR035476">
    <property type="entry name" value="SIS_PGI_1"/>
</dbReference>
<dbReference type="InterPro" id="IPR035482">
    <property type="entry name" value="SIS_PGI_2"/>
</dbReference>
<dbReference type="PANTHER" id="PTHR11469">
    <property type="entry name" value="GLUCOSE-6-PHOSPHATE ISOMERASE"/>
    <property type="match status" value="1"/>
</dbReference>
<dbReference type="PANTHER" id="PTHR11469:SF1">
    <property type="entry name" value="GLUCOSE-6-PHOSPHATE ISOMERASE"/>
    <property type="match status" value="1"/>
</dbReference>
<dbReference type="Pfam" id="PF00342">
    <property type="entry name" value="PGI"/>
    <property type="match status" value="1"/>
</dbReference>
<dbReference type="PRINTS" id="PR00662">
    <property type="entry name" value="G6PISOMERASE"/>
</dbReference>
<dbReference type="SUPFAM" id="SSF53697">
    <property type="entry name" value="SIS domain"/>
    <property type="match status" value="1"/>
</dbReference>
<dbReference type="PROSITE" id="PS00174">
    <property type="entry name" value="P_GLUCOSE_ISOMERASE_2"/>
    <property type="match status" value="1"/>
</dbReference>
<dbReference type="PROSITE" id="PS51463">
    <property type="entry name" value="P_GLUCOSE_ISOMERASE_3"/>
    <property type="match status" value="1"/>
</dbReference>
<feature type="chain" id="PRO_0000180779" description="Probable glucose-6-phosphate isomerase">
    <location>
        <begin position="1"/>
        <end position="426"/>
    </location>
</feature>
<feature type="active site" description="Proton donor" evidence="1">
    <location>
        <position position="272"/>
    </location>
</feature>
<feature type="active site" evidence="1">
    <location>
        <position position="293"/>
    </location>
</feature>
<feature type="active site" evidence="1">
    <location>
        <position position="404"/>
    </location>
</feature>
<comment type="function">
    <text evidence="1">Catalyzes the reversible isomerization of glucose-6-phosphate to fructose-6-phosphate.</text>
</comment>
<comment type="catalytic activity">
    <reaction evidence="1">
        <text>alpha-D-glucose 6-phosphate = beta-D-fructose 6-phosphate</text>
        <dbReference type="Rhea" id="RHEA:11816"/>
        <dbReference type="ChEBI" id="CHEBI:57634"/>
        <dbReference type="ChEBI" id="CHEBI:58225"/>
        <dbReference type="EC" id="5.3.1.9"/>
    </reaction>
</comment>
<comment type="pathway">
    <text evidence="1">Carbohydrate biosynthesis; gluconeogenesis.</text>
</comment>
<comment type="pathway">
    <text evidence="1">Carbohydrate degradation; glycolysis; D-glyceraldehyde 3-phosphate and glycerone phosphate from D-glucose: step 2/4.</text>
</comment>
<comment type="subcellular location">
    <subcellularLocation>
        <location evidence="1">Cytoplasm</location>
    </subcellularLocation>
</comment>
<comment type="similarity">
    <text evidence="1 2">Belongs to the GPI family.</text>
</comment>
<evidence type="ECO:0000255" key="1">
    <source>
        <dbReference type="HAMAP-Rule" id="MF_00473"/>
    </source>
</evidence>
<evidence type="ECO:0000305" key="2"/>
<reference key="1">
    <citation type="journal article" date="2000" name="Proc. Natl. Acad. Sci. U.S.A.">
        <title>Genome sequence of Halobacterium species NRC-1.</title>
        <authorList>
            <person name="Ng W.V."/>
            <person name="Kennedy S.P."/>
            <person name="Mahairas G.G."/>
            <person name="Berquist B."/>
            <person name="Pan M."/>
            <person name="Shukla H.D."/>
            <person name="Lasky S.R."/>
            <person name="Baliga N.S."/>
            <person name="Thorsson V."/>
            <person name="Sbrogna J."/>
            <person name="Swartzell S."/>
            <person name="Weir D."/>
            <person name="Hall J."/>
            <person name="Dahl T.A."/>
            <person name="Welti R."/>
            <person name="Goo Y.A."/>
            <person name="Leithauser B."/>
            <person name="Keller K."/>
            <person name="Cruz R."/>
            <person name="Danson M.J."/>
            <person name="Hough D.W."/>
            <person name="Maddocks D.G."/>
            <person name="Jablonski P.E."/>
            <person name="Krebs M.P."/>
            <person name="Angevine C.M."/>
            <person name="Dale H."/>
            <person name="Isenbarger T.A."/>
            <person name="Peck R.F."/>
            <person name="Pohlschroder M."/>
            <person name="Spudich J.L."/>
            <person name="Jung K.-H."/>
            <person name="Alam M."/>
            <person name="Freitas T."/>
            <person name="Hou S."/>
            <person name="Daniels C.J."/>
            <person name="Dennis P.P."/>
            <person name="Omer A.D."/>
            <person name="Ebhardt H."/>
            <person name="Lowe T.M."/>
            <person name="Liang P."/>
            <person name="Riley M."/>
            <person name="Hood L."/>
            <person name="DasSarma S."/>
        </authorList>
    </citation>
    <scope>NUCLEOTIDE SEQUENCE [LARGE SCALE GENOMIC DNA]</scope>
    <source>
        <strain>ATCC 700922 / JCM 11081 / NRC-1</strain>
    </source>
</reference>
<protein>
    <recommendedName>
        <fullName evidence="1">Probable glucose-6-phosphate isomerase</fullName>
        <shortName evidence="1">GPI</shortName>
        <ecNumber evidence="1">5.3.1.9</ecNumber>
    </recommendedName>
    <alternativeName>
        <fullName evidence="1">Phosphoglucose isomerase</fullName>
        <shortName evidence="1">PGI</shortName>
    </alternativeName>
    <alternativeName>
        <fullName evidence="1">Phosphohexose isomerase</fullName>
        <shortName evidence="1">PHI</shortName>
    </alternativeName>
</protein>
<organism>
    <name type="scientific">Halobacterium salinarum (strain ATCC 700922 / JCM 11081 / NRC-1)</name>
    <name type="common">Halobacterium halobium</name>
    <dbReference type="NCBI Taxonomy" id="64091"/>
    <lineage>
        <taxon>Archaea</taxon>
        <taxon>Methanobacteriati</taxon>
        <taxon>Methanobacteriota</taxon>
        <taxon>Stenosarchaea group</taxon>
        <taxon>Halobacteria</taxon>
        <taxon>Halobacteriales</taxon>
        <taxon>Halobacteriaceae</taxon>
        <taxon>Halobacterium</taxon>
        <taxon>Halobacterium salinarum NRC-34001</taxon>
    </lineage>
</organism>